<evidence type="ECO:0000255" key="1">
    <source>
        <dbReference type="HAMAP-Rule" id="MF_01593"/>
    </source>
</evidence>
<proteinExistence type="inferred from homology"/>
<organism>
    <name type="scientific">Escherichia coli O45:K1 (strain S88 / ExPEC)</name>
    <dbReference type="NCBI Taxonomy" id="585035"/>
    <lineage>
        <taxon>Bacteria</taxon>
        <taxon>Pseudomonadati</taxon>
        <taxon>Pseudomonadota</taxon>
        <taxon>Gammaproteobacteria</taxon>
        <taxon>Enterobacterales</taxon>
        <taxon>Enterobacteriaceae</taxon>
        <taxon>Escherichia</taxon>
    </lineage>
</organism>
<gene>
    <name evidence="1" type="primary">mtfA</name>
    <name type="ordered locus">ECS88_2028</name>
</gene>
<comment type="function">
    <text evidence="1">Involved in the modulation of the activity of the glucose-phosphotransferase system (glucose-PTS). Interacts with the transcriptional repressor Mlc, preventing its interaction with DNA and leading to the modulation of expression of genes regulated by Mlc, including ptsG, which encodes the PTS system glucose-specific EIICB component.</text>
</comment>
<comment type="function">
    <text evidence="1">Shows zinc-dependent metallopeptidase activity.</text>
</comment>
<comment type="cofactor">
    <cofactor evidence="1">
        <name>Zn(2+)</name>
        <dbReference type="ChEBI" id="CHEBI:29105"/>
    </cofactor>
    <text evidence="1">Binds 1 zinc ion per subunit.</text>
</comment>
<comment type="subunit">
    <text evidence="1">Interacts with Mlc.</text>
</comment>
<comment type="subcellular location">
    <subcellularLocation>
        <location evidence="1">Cytoplasm</location>
    </subcellularLocation>
</comment>
<comment type="similarity">
    <text evidence="1">Belongs to the MtfA family.</text>
</comment>
<keyword id="KW-0031">Aminopeptidase</keyword>
<keyword id="KW-0963">Cytoplasm</keyword>
<keyword id="KW-0378">Hydrolase</keyword>
<keyword id="KW-0479">Metal-binding</keyword>
<keyword id="KW-0482">Metalloprotease</keyword>
<keyword id="KW-0645">Protease</keyword>
<keyword id="KW-1185">Reference proteome</keyword>
<keyword id="KW-0862">Zinc</keyword>
<feature type="chain" id="PRO_1000147832" description="Mlc titration factor A">
    <location>
        <begin position="1"/>
        <end position="265"/>
    </location>
</feature>
<feature type="binding site" evidence="1">
    <location>
        <position position="111"/>
    </location>
    <ligand>
        <name>Zn(2+)</name>
        <dbReference type="ChEBI" id="CHEBI:29105"/>
    </ligand>
</feature>
<feature type="binding site" evidence="1">
    <location>
        <position position="148"/>
    </location>
    <ligand>
        <name>Zn(2+)</name>
        <dbReference type="ChEBI" id="CHEBI:29105"/>
    </ligand>
</feature>
<feature type="binding site" evidence="1">
    <location>
        <position position="152"/>
    </location>
    <ligand>
        <name>Zn(2+)</name>
        <dbReference type="ChEBI" id="CHEBI:29105"/>
    </ligand>
</feature>
<feature type="binding site" evidence="1">
    <location>
        <position position="211"/>
    </location>
    <ligand>
        <name>Zn(2+)</name>
        <dbReference type="ChEBI" id="CHEBI:29105"/>
    </ligand>
</feature>
<reference key="1">
    <citation type="journal article" date="2009" name="PLoS Genet.">
        <title>Organised genome dynamics in the Escherichia coli species results in highly diverse adaptive paths.</title>
        <authorList>
            <person name="Touchon M."/>
            <person name="Hoede C."/>
            <person name="Tenaillon O."/>
            <person name="Barbe V."/>
            <person name="Baeriswyl S."/>
            <person name="Bidet P."/>
            <person name="Bingen E."/>
            <person name="Bonacorsi S."/>
            <person name="Bouchier C."/>
            <person name="Bouvet O."/>
            <person name="Calteau A."/>
            <person name="Chiapello H."/>
            <person name="Clermont O."/>
            <person name="Cruveiller S."/>
            <person name="Danchin A."/>
            <person name="Diard M."/>
            <person name="Dossat C."/>
            <person name="Karoui M.E."/>
            <person name="Frapy E."/>
            <person name="Garry L."/>
            <person name="Ghigo J.M."/>
            <person name="Gilles A.M."/>
            <person name="Johnson J."/>
            <person name="Le Bouguenec C."/>
            <person name="Lescat M."/>
            <person name="Mangenot S."/>
            <person name="Martinez-Jehanne V."/>
            <person name="Matic I."/>
            <person name="Nassif X."/>
            <person name="Oztas S."/>
            <person name="Petit M.A."/>
            <person name="Pichon C."/>
            <person name="Rouy Z."/>
            <person name="Ruf C.S."/>
            <person name="Schneider D."/>
            <person name="Tourret J."/>
            <person name="Vacherie B."/>
            <person name="Vallenet D."/>
            <person name="Medigue C."/>
            <person name="Rocha E.P.C."/>
            <person name="Denamur E."/>
        </authorList>
    </citation>
    <scope>NUCLEOTIDE SEQUENCE [LARGE SCALE GENOMIC DNA]</scope>
    <source>
        <strain>S88 / ExPEC</strain>
    </source>
</reference>
<dbReference type="EC" id="3.4.11.-" evidence="1"/>
<dbReference type="EMBL" id="CU928161">
    <property type="protein sequence ID" value="CAR03324.1"/>
    <property type="molecule type" value="Genomic_DNA"/>
</dbReference>
<dbReference type="RefSeq" id="WP_001350677.1">
    <property type="nucleotide sequence ID" value="NC_011742.1"/>
</dbReference>
<dbReference type="SMR" id="B7MCM7"/>
<dbReference type="MEROPS" id="M90.001"/>
<dbReference type="KEGG" id="ecz:ECS88_2028"/>
<dbReference type="HOGENOM" id="CLU_063037_2_0_6"/>
<dbReference type="Proteomes" id="UP000000747">
    <property type="component" value="Chromosome"/>
</dbReference>
<dbReference type="GO" id="GO:0005829">
    <property type="term" value="C:cytosol"/>
    <property type="evidence" value="ECO:0007669"/>
    <property type="project" value="TreeGrafter"/>
</dbReference>
<dbReference type="GO" id="GO:0004177">
    <property type="term" value="F:aminopeptidase activity"/>
    <property type="evidence" value="ECO:0007669"/>
    <property type="project" value="UniProtKB-UniRule"/>
</dbReference>
<dbReference type="GO" id="GO:0008237">
    <property type="term" value="F:metallopeptidase activity"/>
    <property type="evidence" value="ECO:0007669"/>
    <property type="project" value="UniProtKB-UniRule"/>
</dbReference>
<dbReference type="GO" id="GO:0008270">
    <property type="term" value="F:zinc ion binding"/>
    <property type="evidence" value="ECO:0007669"/>
    <property type="project" value="UniProtKB-UniRule"/>
</dbReference>
<dbReference type="GO" id="GO:0006508">
    <property type="term" value="P:proteolysis"/>
    <property type="evidence" value="ECO:0007669"/>
    <property type="project" value="UniProtKB-KW"/>
</dbReference>
<dbReference type="CDD" id="cd20169">
    <property type="entry name" value="Peptidase_M90_mtfA"/>
    <property type="match status" value="1"/>
</dbReference>
<dbReference type="FunFam" id="1.10.472.150:FF:000001">
    <property type="entry name" value="Protein MtfA"/>
    <property type="match status" value="1"/>
</dbReference>
<dbReference type="FunFam" id="3.40.390.10:FF:000012">
    <property type="entry name" value="Protein MtfA"/>
    <property type="match status" value="1"/>
</dbReference>
<dbReference type="Gene3D" id="3.40.390.10">
    <property type="entry name" value="Collagenase (Catalytic Domain)"/>
    <property type="match status" value="1"/>
</dbReference>
<dbReference type="Gene3D" id="1.10.472.150">
    <property type="entry name" value="Glucose-regulated metallo-peptidase M90, N-terminal domain"/>
    <property type="match status" value="1"/>
</dbReference>
<dbReference type="HAMAP" id="MF_01593">
    <property type="entry name" value="MtfA"/>
    <property type="match status" value="1"/>
</dbReference>
<dbReference type="InterPro" id="IPR024079">
    <property type="entry name" value="MetalloPept_cat_dom_sf"/>
</dbReference>
<dbReference type="InterPro" id="IPR057256">
    <property type="entry name" value="MtfA_enterob"/>
</dbReference>
<dbReference type="InterPro" id="IPR010384">
    <property type="entry name" value="MtfA_fam"/>
</dbReference>
<dbReference type="InterPro" id="IPR042252">
    <property type="entry name" value="MtfA_N"/>
</dbReference>
<dbReference type="NCBIfam" id="NF011939">
    <property type="entry name" value="PRK15410.1"/>
    <property type="match status" value="1"/>
</dbReference>
<dbReference type="PANTHER" id="PTHR30164">
    <property type="entry name" value="MTFA PEPTIDASE"/>
    <property type="match status" value="1"/>
</dbReference>
<dbReference type="PANTHER" id="PTHR30164:SF2">
    <property type="entry name" value="PROTEIN MTFA"/>
    <property type="match status" value="1"/>
</dbReference>
<dbReference type="Pfam" id="PF06167">
    <property type="entry name" value="Peptidase_M90"/>
    <property type="match status" value="1"/>
</dbReference>
<dbReference type="SUPFAM" id="SSF55486">
    <property type="entry name" value="Metalloproteases ('zincins'), catalytic domain"/>
    <property type="match status" value="1"/>
</dbReference>
<sequence>MIKWPWKVQESAHQTALPWQEALSIPLLTCLTEQEQSKLVTLAERFLQQKRLVPLQGFELNSLRSCRIALLFCLPVLELGLEWLDSFHEVLIYPAPFVVDDEWEDDIGLVHNQRIVQSGQSWQQGPIVLNWLDIQDSFDASGFNLIIHEVAHKLDTRNGDRASGVPFIPLREVAGWEHDLHAAMNNIQEEIELVGENAASIDAYAASDPAECFAVLSEYFFSAPELFAPRFPSLWQRFCQFYQQDPLQRLHHANDTDSFSATNVH</sequence>
<accession>B7MCM7</accession>
<name>MTFA_ECO45</name>
<protein>
    <recommendedName>
        <fullName evidence="1">Mlc titration factor A</fullName>
    </recommendedName>
    <alternativeName>
        <fullName evidence="1">Probable zinc metallopeptidase MtfA</fullName>
        <ecNumber evidence="1">3.4.11.-</ecNumber>
    </alternativeName>
</protein>